<accession>Q9WV75</accession>
<organism>
    <name type="scientific">Rattus norvegicus</name>
    <name type="common">Rat</name>
    <dbReference type="NCBI Taxonomy" id="10116"/>
    <lineage>
        <taxon>Eukaryota</taxon>
        <taxon>Metazoa</taxon>
        <taxon>Chordata</taxon>
        <taxon>Craniata</taxon>
        <taxon>Vertebrata</taxon>
        <taxon>Euteleostomi</taxon>
        <taxon>Mammalia</taxon>
        <taxon>Eutheria</taxon>
        <taxon>Euarchontoglires</taxon>
        <taxon>Glires</taxon>
        <taxon>Rodentia</taxon>
        <taxon>Myomorpha</taxon>
        <taxon>Muroidea</taxon>
        <taxon>Muridae</taxon>
        <taxon>Murinae</taxon>
        <taxon>Rattus</taxon>
    </lineage>
</organism>
<reference key="1">
    <citation type="journal article" date="1999" name="Development">
        <title>F-spondin and mindin: two structurally and functionally related genes expressed in the hippocampus that promote outgrowth of embryonic hippocampal neurons.</title>
        <authorList>
            <person name="Feinstein Y."/>
            <person name="Borrell V."/>
            <person name="Garcia C."/>
            <person name="Burstyn-Cohen T."/>
            <person name="Tzarfaty V."/>
            <person name="Frumkin A."/>
            <person name="Nose A."/>
            <person name="Okamoto H."/>
            <person name="Higashijima S."/>
            <person name="Soriano A."/>
            <person name="Klar A."/>
        </authorList>
    </citation>
    <scope>NUCLEOTIDE SEQUENCE [MRNA]</scope>
    <scope>FUNCTION</scope>
    <scope>TISSUE SPECIFICITY</scope>
    <source>
        <strain>Sprague-Dawley</strain>
    </source>
</reference>
<reference key="2">
    <citation type="journal article" date="2004" name="Genome Res.">
        <title>The status, quality, and expansion of the NIH full-length cDNA project: the Mammalian Gene Collection (MGC).</title>
        <authorList>
            <consortium name="The MGC Project Team"/>
        </authorList>
    </citation>
    <scope>NUCLEOTIDE SEQUENCE [LARGE SCALE MRNA]</scope>
    <source>
        <tissue>Lung</tissue>
    </source>
</reference>
<gene>
    <name type="primary">Spon2</name>
</gene>
<proteinExistence type="evidence at transcript level"/>
<comment type="function">
    <text evidence="1 6">Cell adhesion protein that promotes adhesion and outgrowth of hippocampal embryonic neurons. Binds directly to bacteria and their components and functions as an opsonin for macrophage phagocytosis of bacteria. Essential in the initiation of the innate immune response and represents a unique pattern-recognition molecule in the ECM for microbial pathogens (By similarity).</text>
</comment>
<comment type="subunit">
    <text evidence="1">Monomer. Interacts with integrin (By similarity).</text>
</comment>
<comment type="subcellular location">
    <subcellularLocation>
        <location>Secreted</location>
        <location>Extracellular space</location>
        <location>Extracellular matrix</location>
    </subcellularLocation>
</comment>
<comment type="tissue specificity">
    <text evidence="6">Abundantly expressed in the developing hippocampus.</text>
</comment>
<evidence type="ECO:0000250" key="1"/>
<evidence type="ECO:0000250" key="2">
    <source>
        <dbReference type="UniProtKB" id="Q9BUD6"/>
    </source>
</evidence>
<evidence type="ECO:0000255" key="3"/>
<evidence type="ECO:0000255" key="4">
    <source>
        <dbReference type="PROSITE-ProRule" id="PRU00210"/>
    </source>
</evidence>
<evidence type="ECO:0000255" key="5">
    <source>
        <dbReference type="PROSITE-ProRule" id="PRU00364"/>
    </source>
</evidence>
<evidence type="ECO:0000269" key="6">
    <source>
    </source>
</evidence>
<name>SPON2_RAT</name>
<sequence length="330" mass="36015">MENVSFSLDRTLWVFLLAMLGSTAGQPLGGESVCTARPLARYSITFTGKWSQTAFPKQYPLFRPPAQWSSLLGAAHSSDYSMWRKNEYVSNGLRDFAERGEAWALMKEIEAAGEKLQSVHAVFSAPAVPSGTGQTSAELEVHPRHSLVSFVVRIVPSPDWFVGIDSLDLCEGGRWKEQVVLDLYPHDAGTDSGFTFSSPNFATIPQDTVTEITASSPSHPANSFYYPRLKSLPPIAKVTFVRLRQSPRAFAPPSLDLASRGNEIVDSLSVPETPLDCEVSLWSSWGLCGGPCGKLGAKSRTRYVRVQPANNGTPCPELEEEAECAPDNCV</sequence>
<dbReference type="EMBL" id="AF155196">
    <property type="protein sequence ID" value="AAD38195.1"/>
    <property type="molecule type" value="mRNA"/>
</dbReference>
<dbReference type="EMBL" id="BC078734">
    <property type="protein sequence ID" value="AAH78734.1"/>
    <property type="molecule type" value="mRNA"/>
</dbReference>
<dbReference type="RefSeq" id="NP_612542.1">
    <property type="nucleotide sequence ID" value="NM_138533.3"/>
</dbReference>
<dbReference type="RefSeq" id="XP_017454551.1">
    <property type="nucleotide sequence ID" value="XM_017599062.3"/>
</dbReference>
<dbReference type="RefSeq" id="XP_017454552.1">
    <property type="nucleotide sequence ID" value="XM_017599063.3"/>
</dbReference>
<dbReference type="RefSeq" id="XP_017460311.1">
    <property type="nucleotide sequence ID" value="XM_017604822.1"/>
</dbReference>
<dbReference type="RefSeq" id="XP_017460312.1">
    <property type="nucleotide sequence ID" value="XM_017604823.1"/>
</dbReference>
<dbReference type="SMR" id="Q9WV75"/>
<dbReference type="FunCoup" id="Q9WV75">
    <property type="interactions" value="141"/>
</dbReference>
<dbReference type="STRING" id="10116.ENSRNOP00000008262"/>
<dbReference type="GlyCosmos" id="Q9WV75">
    <property type="glycosylation" value="1 site, No reported glycans"/>
</dbReference>
<dbReference type="GlyGen" id="Q9WV75">
    <property type="glycosylation" value="1 site"/>
</dbReference>
<dbReference type="PhosphoSitePlus" id="Q9WV75"/>
<dbReference type="PaxDb" id="10116-ENSRNOP00000008262"/>
<dbReference type="Ensembl" id="ENSRNOT00000008262.7">
    <property type="protein sequence ID" value="ENSRNOP00000008262.5"/>
    <property type="gene ID" value="ENSRNOG00000006033.7"/>
</dbReference>
<dbReference type="GeneID" id="171569"/>
<dbReference type="KEGG" id="rno:171569"/>
<dbReference type="AGR" id="RGD:708584"/>
<dbReference type="CTD" id="10417"/>
<dbReference type="RGD" id="708584">
    <property type="gene designation" value="Spon2"/>
</dbReference>
<dbReference type="eggNOG" id="KOG3539">
    <property type="taxonomic scope" value="Eukaryota"/>
</dbReference>
<dbReference type="GeneTree" id="ENSGT00940000159900"/>
<dbReference type="HOGENOM" id="CLU_034407_0_0_1"/>
<dbReference type="InParanoid" id="Q9WV75"/>
<dbReference type="OMA" id="PQDRITQ"/>
<dbReference type="OrthoDB" id="19464at9989"/>
<dbReference type="PhylomeDB" id="Q9WV75"/>
<dbReference type="Reactome" id="R-RNO-5173214">
    <property type="pathway name" value="O-glycosylation of TSR domain-containing proteins"/>
</dbReference>
<dbReference type="PRO" id="PR:Q9WV75"/>
<dbReference type="Proteomes" id="UP000002494">
    <property type="component" value="Chromosome 14"/>
</dbReference>
<dbReference type="Bgee" id="ENSRNOG00000006033">
    <property type="expression patterns" value="Expressed in esophagus and 18 other cell types or tissues"/>
</dbReference>
<dbReference type="GO" id="GO:0031012">
    <property type="term" value="C:extracellular matrix"/>
    <property type="evidence" value="ECO:0000266"/>
    <property type="project" value="RGD"/>
</dbReference>
<dbReference type="GO" id="GO:0005615">
    <property type="term" value="C:extracellular space"/>
    <property type="evidence" value="ECO:0000266"/>
    <property type="project" value="RGD"/>
</dbReference>
<dbReference type="GO" id="GO:0003823">
    <property type="term" value="F:antigen binding"/>
    <property type="evidence" value="ECO:0000266"/>
    <property type="project" value="RGD"/>
</dbReference>
<dbReference type="GO" id="GO:0001530">
    <property type="term" value="F:lipopolysaccharide binding"/>
    <property type="evidence" value="ECO:0000266"/>
    <property type="project" value="RGD"/>
</dbReference>
<dbReference type="GO" id="GO:0046872">
    <property type="term" value="F:metal ion binding"/>
    <property type="evidence" value="ECO:0007669"/>
    <property type="project" value="UniProtKB-KW"/>
</dbReference>
<dbReference type="GO" id="GO:0005102">
    <property type="term" value="F:signaling receptor binding"/>
    <property type="evidence" value="ECO:0000314"/>
    <property type="project" value="RGD"/>
</dbReference>
<dbReference type="GO" id="GO:0007155">
    <property type="term" value="P:cell adhesion"/>
    <property type="evidence" value="ECO:0000314"/>
    <property type="project" value="RGD"/>
</dbReference>
<dbReference type="GO" id="GO:0071222">
    <property type="term" value="P:cellular response to lipopolysaccharide"/>
    <property type="evidence" value="ECO:0000266"/>
    <property type="project" value="RGD"/>
</dbReference>
<dbReference type="GO" id="GO:0036120">
    <property type="term" value="P:cellular response to platelet-derived growth factor stimulus"/>
    <property type="evidence" value="ECO:0000270"/>
    <property type="project" value="RGD"/>
</dbReference>
<dbReference type="GO" id="GO:0042742">
    <property type="term" value="P:defense response to bacterium"/>
    <property type="evidence" value="ECO:0000266"/>
    <property type="project" value="RGD"/>
</dbReference>
<dbReference type="GO" id="GO:0050832">
    <property type="term" value="P:defense response to fungus"/>
    <property type="evidence" value="ECO:0000266"/>
    <property type="project" value="RGD"/>
</dbReference>
<dbReference type="GO" id="GO:0051607">
    <property type="term" value="P:defense response to virus"/>
    <property type="evidence" value="ECO:0000266"/>
    <property type="project" value="RGD"/>
</dbReference>
<dbReference type="GO" id="GO:0043152">
    <property type="term" value="P:induction of bacterial agglutination"/>
    <property type="evidence" value="ECO:0000266"/>
    <property type="project" value="RGD"/>
</dbReference>
<dbReference type="GO" id="GO:0045087">
    <property type="term" value="P:innate immune response"/>
    <property type="evidence" value="ECO:0000266"/>
    <property type="project" value="RGD"/>
</dbReference>
<dbReference type="GO" id="GO:0002448">
    <property type="term" value="P:mast cell mediated immunity"/>
    <property type="evidence" value="ECO:0000266"/>
    <property type="project" value="RGD"/>
</dbReference>
<dbReference type="GO" id="GO:0008228">
    <property type="term" value="P:opsonization"/>
    <property type="evidence" value="ECO:0000266"/>
    <property type="project" value="RGD"/>
</dbReference>
<dbReference type="GO" id="GO:0032755">
    <property type="term" value="P:positive regulation of interleukin-6 production"/>
    <property type="evidence" value="ECO:0000266"/>
    <property type="project" value="RGD"/>
</dbReference>
<dbReference type="GO" id="GO:0060907">
    <property type="term" value="P:positive regulation of macrophage cytokine production"/>
    <property type="evidence" value="ECO:0000266"/>
    <property type="project" value="RGD"/>
</dbReference>
<dbReference type="GO" id="GO:0032760">
    <property type="term" value="P:positive regulation of tumor necrosis factor production"/>
    <property type="evidence" value="ECO:0000266"/>
    <property type="project" value="RGD"/>
</dbReference>
<dbReference type="GO" id="GO:0032496">
    <property type="term" value="P:response to lipopolysaccharide"/>
    <property type="evidence" value="ECO:0000266"/>
    <property type="project" value="RGD"/>
</dbReference>
<dbReference type="GO" id="GO:1990874">
    <property type="term" value="P:vascular associated smooth muscle cell proliferation"/>
    <property type="evidence" value="ECO:0000315"/>
    <property type="project" value="RGD"/>
</dbReference>
<dbReference type="FunFam" id="2.20.100.10:FF:000037">
    <property type="entry name" value="Spondin 2"/>
    <property type="match status" value="1"/>
</dbReference>
<dbReference type="FunFam" id="2.60.40.2130:FF:000003">
    <property type="entry name" value="Spondin 2"/>
    <property type="match status" value="1"/>
</dbReference>
<dbReference type="Gene3D" id="2.60.40.2130">
    <property type="entry name" value="F-spondin domain"/>
    <property type="match status" value="1"/>
</dbReference>
<dbReference type="Gene3D" id="2.20.100.10">
    <property type="entry name" value="Thrombospondin type-1 (TSP1) repeat"/>
    <property type="match status" value="1"/>
</dbReference>
<dbReference type="InterPro" id="IPR051418">
    <property type="entry name" value="Spondin/Thrombospondin_T1"/>
</dbReference>
<dbReference type="InterPro" id="IPR009465">
    <property type="entry name" value="Spondin_N"/>
</dbReference>
<dbReference type="InterPro" id="IPR038678">
    <property type="entry name" value="Spondin_N_sf"/>
</dbReference>
<dbReference type="InterPro" id="IPR000884">
    <property type="entry name" value="TSP1_rpt"/>
</dbReference>
<dbReference type="InterPro" id="IPR036383">
    <property type="entry name" value="TSP1_rpt_sf"/>
</dbReference>
<dbReference type="InterPro" id="IPR044004">
    <property type="entry name" value="TSP1_spondin_dom"/>
</dbReference>
<dbReference type="NCBIfam" id="NF038123">
    <property type="entry name" value="NF038123_dom"/>
    <property type="match status" value="1"/>
</dbReference>
<dbReference type="PANTHER" id="PTHR11311">
    <property type="entry name" value="SPONDIN"/>
    <property type="match status" value="1"/>
</dbReference>
<dbReference type="PANTHER" id="PTHR11311:SF15">
    <property type="entry name" value="SPONDIN-2"/>
    <property type="match status" value="1"/>
</dbReference>
<dbReference type="Pfam" id="PF06468">
    <property type="entry name" value="Spond_N"/>
    <property type="match status" value="1"/>
</dbReference>
<dbReference type="Pfam" id="PF19028">
    <property type="entry name" value="TSP1_spondin"/>
    <property type="match status" value="1"/>
</dbReference>
<dbReference type="SMART" id="SM00209">
    <property type="entry name" value="TSP1"/>
    <property type="match status" value="1"/>
</dbReference>
<dbReference type="SUPFAM" id="SSF82895">
    <property type="entry name" value="TSP-1 type 1 repeat"/>
    <property type="match status" value="1"/>
</dbReference>
<dbReference type="PROSITE" id="PS51020">
    <property type="entry name" value="SPONDIN"/>
    <property type="match status" value="1"/>
</dbReference>
<dbReference type="PROSITE" id="PS50092">
    <property type="entry name" value="TSP1"/>
    <property type="match status" value="1"/>
</dbReference>
<feature type="signal peptide" evidence="3">
    <location>
        <begin position="1"/>
        <end position="25"/>
    </location>
</feature>
<feature type="chain" id="PRO_0000035872" description="Spondin-2">
    <location>
        <begin position="26"/>
        <end position="330"/>
    </location>
</feature>
<feature type="domain" description="Spondin" evidence="5">
    <location>
        <begin position="30"/>
        <end position="220"/>
    </location>
</feature>
<feature type="domain" description="TSP type-1" evidence="4">
    <location>
        <begin position="276"/>
        <end position="330"/>
    </location>
</feature>
<feature type="binding site" evidence="2">
    <location>
        <position position="140"/>
    </location>
    <ligand>
        <name>a divalent metal cation</name>
        <dbReference type="ChEBI" id="CHEBI:60240"/>
    </ligand>
</feature>
<feature type="binding site" evidence="2">
    <location>
        <position position="159"/>
    </location>
    <ligand>
        <name>Ca(2+)</name>
        <dbReference type="ChEBI" id="CHEBI:29108"/>
    </ligand>
</feature>
<feature type="binding site" evidence="2">
    <location>
        <position position="187"/>
    </location>
    <ligand>
        <name>Ca(2+)</name>
        <dbReference type="ChEBI" id="CHEBI:29108"/>
    </ligand>
</feature>
<feature type="binding site" evidence="2">
    <location>
        <position position="191"/>
    </location>
    <ligand>
        <name>Ca(2+)</name>
        <dbReference type="ChEBI" id="CHEBI:29108"/>
    </ligand>
</feature>
<feature type="site" description="Important for metal ion-dependent interaction with integrin" evidence="2">
    <location>
        <position position="140"/>
    </location>
</feature>
<feature type="glycosylation site" description="C-linked (Man) tryptophan" evidence="2">
    <location>
        <position position="282"/>
    </location>
</feature>
<feature type="disulfide bond" evidence="4">
    <location>
        <begin position="34"/>
        <end position="170"/>
    </location>
</feature>
<keyword id="KW-0106">Calcium</keyword>
<keyword id="KW-0130">Cell adhesion</keyword>
<keyword id="KW-1015">Disulfide bond</keyword>
<keyword id="KW-0272">Extracellular matrix</keyword>
<keyword id="KW-0325">Glycoprotein</keyword>
<keyword id="KW-0391">Immunity</keyword>
<keyword id="KW-0399">Innate immunity</keyword>
<keyword id="KW-0479">Metal-binding</keyword>
<keyword id="KW-1185">Reference proteome</keyword>
<keyword id="KW-0964">Secreted</keyword>
<keyword id="KW-0732">Signal</keyword>
<protein>
    <recommendedName>
        <fullName>Spondin-2</fullName>
    </recommendedName>
    <alternativeName>
        <fullName>Mindin</fullName>
    </alternativeName>
</protein>